<comment type="function">
    <text evidence="1">ATP-dependent specificity component of the Clp protease. It directs the protease to specific substrates. Can perform chaperone functions in the absence of ClpP.</text>
</comment>
<comment type="subunit">
    <text evidence="1">Component of the ClpX-ClpP complex. Forms a hexameric ring that, in the presence of ATP, binds to fourteen ClpP subunits assembled into a disk-like structure with a central cavity, resembling the structure of eukaryotic proteasomes.</text>
</comment>
<comment type="similarity">
    <text evidence="1">Belongs to the ClpX chaperone family.</text>
</comment>
<feature type="chain" id="PRO_0000160453" description="ATP-dependent Clp protease ATP-binding subunit ClpX">
    <location>
        <begin position="1"/>
        <end position="426"/>
    </location>
</feature>
<feature type="domain" description="ClpX-type ZB" evidence="2">
    <location>
        <begin position="4"/>
        <end position="57"/>
    </location>
</feature>
<feature type="binding site" evidence="2">
    <location>
        <position position="16"/>
    </location>
    <ligand>
        <name>Zn(2+)</name>
        <dbReference type="ChEBI" id="CHEBI:29105"/>
    </ligand>
</feature>
<feature type="binding site" evidence="2">
    <location>
        <position position="19"/>
    </location>
    <ligand>
        <name>Zn(2+)</name>
        <dbReference type="ChEBI" id="CHEBI:29105"/>
    </ligand>
</feature>
<feature type="binding site" evidence="2">
    <location>
        <position position="38"/>
    </location>
    <ligand>
        <name>Zn(2+)</name>
        <dbReference type="ChEBI" id="CHEBI:29105"/>
    </ligand>
</feature>
<feature type="binding site" evidence="2">
    <location>
        <position position="41"/>
    </location>
    <ligand>
        <name>Zn(2+)</name>
        <dbReference type="ChEBI" id="CHEBI:29105"/>
    </ligand>
</feature>
<feature type="binding site" evidence="1">
    <location>
        <begin position="122"/>
        <end position="129"/>
    </location>
    <ligand>
        <name>ATP</name>
        <dbReference type="ChEBI" id="CHEBI:30616"/>
    </ligand>
</feature>
<sequence length="426" mass="46542">MTDKSKESGSGKLLYCSFCGKSQHEVRKLIAGPSVYICDECVDLCNDIIREEIKDVLPKRESEALPTPREIRAHLDDYVIGQDHAKKVLAVAVYNHYKRLRNGDTTSDGVELGKSNILLIGPTGSGKTLLAETLARFLDVPFTMADATTLTEAGYVGEDVENIIQKLLQKCDYDVAKAERGIVYIDEIDKISRKAENPSITRDVSGEGVQQALLKLVEGTIASVPPQGGRKHPQQEFLQVDTSKILFICGGAFAGLDKVIEQRVATGTGIGFGAEVRSKDESKTVGELFTQVEPEDLVKYGLIPEFIGRLPVTASLTELDEEALIQILCQPKNALTKQYAALFELEGADLEFREDALKAIAKKAMERKTGARGLRSILEGVLLETMYELPSMDDVSKVVIDESVINGESEPLLIYTNSDSQAAGAE</sequence>
<accession>Q8DG27</accession>
<gene>
    <name evidence="1" type="primary">clpX</name>
    <name type="ordered locus">VV1_0022</name>
</gene>
<organism>
    <name type="scientific">Vibrio vulnificus (strain CMCP6)</name>
    <dbReference type="NCBI Taxonomy" id="216895"/>
    <lineage>
        <taxon>Bacteria</taxon>
        <taxon>Pseudomonadati</taxon>
        <taxon>Pseudomonadota</taxon>
        <taxon>Gammaproteobacteria</taxon>
        <taxon>Vibrionales</taxon>
        <taxon>Vibrionaceae</taxon>
        <taxon>Vibrio</taxon>
    </lineage>
</organism>
<dbReference type="EMBL" id="AE016795">
    <property type="protein sequence ID" value="AAO08566.1"/>
    <property type="molecule type" value="Genomic_DNA"/>
</dbReference>
<dbReference type="RefSeq" id="WP_011078148.1">
    <property type="nucleotide sequence ID" value="NC_004459.3"/>
</dbReference>
<dbReference type="SMR" id="Q8DG27"/>
<dbReference type="KEGG" id="vvu:VV1_0022"/>
<dbReference type="HOGENOM" id="CLU_014218_8_2_6"/>
<dbReference type="Proteomes" id="UP000002275">
    <property type="component" value="Chromosome 1"/>
</dbReference>
<dbReference type="GO" id="GO:0009376">
    <property type="term" value="C:HslUV protease complex"/>
    <property type="evidence" value="ECO:0007669"/>
    <property type="project" value="TreeGrafter"/>
</dbReference>
<dbReference type="GO" id="GO:0005524">
    <property type="term" value="F:ATP binding"/>
    <property type="evidence" value="ECO:0007669"/>
    <property type="project" value="UniProtKB-UniRule"/>
</dbReference>
<dbReference type="GO" id="GO:0016887">
    <property type="term" value="F:ATP hydrolysis activity"/>
    <property type="evidence" value="ECO:0007669"/>
    <property type="project" value="InterPro"/>
</dbReference>
<dbReference type="GO" id="GO:0140662">
    <property type="term" value="F:ATP-dependent protein folding chaperone"/>
    <property type="evidence" value="ECO:0007669"/>
    <property type="project" value="InterPro"/>
</dbReference>
<dbReference type="GO" id="GO:0046983">
    <property type="term" value="F:protein dimerization activity"/>
    <property type="evidence" value="ECO:0007669"/>
    <property type="project" value="InterPro"/>
</dbReference>
<dbReference type="GO" id="GO:0051082">
    <property type="term" value="F:unfolded protein binding"/>
    <property type="evidence" value="ECO:0007669"/>
    <property type="project" value="UniProtKB-UniRule"/>
</dbReference>
<dbReference type="GO" id="GO:0008270">
    <property type="term" value="F:zinc ion binding"/>
    <property type="evidence" value="ECO:0007669"/>
    <property type="project" value="InterPro"/>
</dbReference>
<dbReference type="GO" id="GO:0051301">
    <property type="term" value="P:cell division"/>
    <property type="evidence" value="ECO:0007669"/>
    <property type="project" value="TreeGrafter"/>
</dbReference>
<dbReference type="GO" id="GO:0051603">
    <property type="term" value="P:proteolysis involved in protein catabolic process"/>
    <property type="evidence" value="ECO:0007669"/>
    <property type="project" value="TreeGrafter"/>
</dbReference>
<dbReference type="CDD" id="cd19497">
    <property type="entry name" value="RecA-like_ClpX"/>
    <property type="match status" value="1"/>
</dbReference>
<dbReference type="FunFam" id="1.10.8.60:FF:000002">
    <property type="entry name" value="ATP-dependent Clp protease ATP-binding subunit ClpX"/>
    <property type="match status" value="1"/>
</dbReference>
<dbReference type="FunFam" id="3.40.50.300:FF:000005">
    <property type="entry name" value="ATP-dependent Clp protease ATP-binding subunit ClpX"/>
    <property type="match status" value="1"/>
</dbReference>
<dbReference type="Gene3D" id="1.10.8.60">
    <property type="match status" value="1"/>
</dbReference>
<dbReference type="Gene3D" id="6.20.220.10">
    <property type="entry name" value="ClpX chaperone, C4-type zinc finger domain"/>
    <property type="match status" value="1"/>
</dbReference>
<dbReference type="Gene3D" id="3.40.50.300">
    <property type="entry name" value="P-loop containing nucleotide triphosphate hydrolases"/>
    <property type="match status" value="1"/>
</dbReference>
<dbReference type="HAMAP" id="MF_00175">
    <property type="entry name" value="ClpX"/>
    <property type="match status" value="1"/>
</dbReference>
<dbReference type="InterPro" id="IPR003593">
    <property type="entry name" value="AAA+_ATPase"/>
</dbReference>
<dbReference type="InterPro" id="IPR050052">
    <property type="entry name" value="ATP-dep_Clp_protease_ClpX"/>
</dbReference>
<dbReference type="InterPro" id="IPR003959">
    <property type="entry name" value="ATPase_AAA_core"/>
</dbReference>
<dbReference type="InterPro" id="IPR019489">
    <property type="entry name" value="Clp_ATPase_C"/>
</dbReference>
<dbReference type="InterPro" id="IPR004487">
    <property type="entry name" value="Clp_protease_ATP-bd_su_ClpX"/>
</dbReference>
<dbReference type="InterPro" id="IPR046425">
    <property type="entry name" value="ClpX_bact"/>
</dbReference>
<dbReference type="InterPro" id="IPR027417">
    <property type="entry name" value="P-loop_NTPase"/>
</dbReference>
<dbReference type="InterPro" id="IPR010603">
    <property type="entry name" value="Znf_CppX_C4"/>
</dbReference>
<dbReference type="InterPro" id="IPR038366">
    <property type="entry name" value="Znf_CppX_C4_sf"/>
</dbReference>
<dbReference type="NCBIfam" id="TIGR00382">
    <property type="entry name" value="clpX"/>
    <property type="match status" value="1"/>
</dbReference>
<dbReference type="NCBIfam" id="NF003745">
    <property type="entry name" value="PRK05342.1"/>
    <property type="match status" value="1"/>
</dbReference>
<dbReference type="PANTHER" id="PTHR48102:SF7">
    <property type="entry name" value="ATP-DEPENDENT CLP PROTEASE ATP-BINDING SUBUNIT CLPX-LIKE, MITOCHONDRIAL"/>
    <property type="match status" value="1"/>
</dbReference>
<dbReference type="PANTHER" id="PTHR48102">
    <property type="entry name" value="ATP-DEPENDENT CLP PROTEASE ATP-BINDING SUBUNIT CLPX-LIKE, MITOCHONDRIAL-RELATED"/>
    <property type="match status" value="1"/>
</dbReference>
<dbReference type="Pfam" id="PF07724">
    <property type="entry name" value="AAA_2"/>
    <property type="match status" value="1"/>
</dbReference>
<dbReference type="Pfam" id="PF10431">
    <property type="entry name" value="ClpB_D2-small"/>
    <property type="match status" value="1"/>
</dbReference>
<dbReference type="Pfam" id="PF06689">
    <property type="entry name" value="zf-C4_ClpX"/>
    <property type="match status" value="1"/>
</dbReference>
<dbReference type="SMART" id="SM00382">
    <property type="entry name" value="AAA"/>
    <property type="match status" value="1"/>
</dbReference>
<dbReference type="SMART" id="SM01086">
    <property type="entry name" value="ClpB_D2-small"/>
    <property type="match status" value="1"/>
</dbReference>
<dbReference type="SMART" id="SM00994">
    <property type="entry name" value="zf-C4_ClpX"/>
    <property type="match status" value="1"/>
</dbReference>
<dbReference type="SUPFAM" id="SSF57716">
    <property type="entry name" value="Glucocorticoid receptor-like (DNA-binding domain)"/>
    <property type="match status" value="1"/>
</dbReference>
<dbReference type="SUPFAM" id="SSF52540">
    <property type="entry name" value="P-loop containing nucleoside triphosphate hydrolases"/>
    <property type="match status" value="1"/>
</dbReference>
<dbReference type="PROSITE" id="PS51902">
    <property type="entry name" value="CLPX_ZB"/>
    <property type="match status" value="1"/>
</dbReference>
<proteinExistence type="inferred from homology"/>
<keyword id="KW-0067">ATP-binding</keyword>
<keyword id="KW-0143">Chaperone</keyword>
<keyword id="KW-0479">Metal-binding</keyword>
<keyword id="KW-0547">Nucleotide-binding</keyword>
<keyword id="KW-0862">Zinc</keyword>
<name>CLPX_VIBVU</name>
<protein>
    <recommendedName>
        <fullName evidence="1">ATP-dependent Clp protease ATP-binding subunit ClpX</fullName>
    </recommendedName>
</protein>
<reference key="1">
    <citation type="submission" date="2002-12" db="EMBL/GenBank/DDBJ databases">
        <title>Complete genome sequence of Vibrio vulnificus CMCP6.</title>
        <authorList>
            <person name="Rhee J.H."/>
            <person name="Kim S.Y."/>
            <person name="Chung S.S."/>
            <person name="Kim J.J."/>
            <person name="Moon Y.H."/>
            <person name="Jeong H."/>
            <person name="Choy H.E."/>
        </authorList>
    </citation>
    <scope>NUCLEOTIDE SEQUENCE [LARGE SCALE GENOMIC DNA]</scope>
    <source>
        <strain>CMCP6</strain>
    </source>
</reference>
<evidence type="ECO:0000255" key="1">
    <source>
        <dbReference type="HAMAP-Rule" id="MF_00175"/>
    </source>
</evidence>
<evidence type="ECO:0000255" key="2">
    <source>
        <dbReference type="PROSITE-ProRule" id="PRU01250"/>
    </source>
</evidence>